<feature type="chain" id="PRO_0000084470" description="Leucine-rich repeat-containing protein 10">
    <location>
        <begin position="1"/>
        <end position="277"/>
    </location>
</feature>
<feature type="repeat" description="LRR 1">
    <location>
        <begin position="53"/>
        <end position="74"/>
    </location>
</feature>
<feature type="repeat" description="LRR 2">
    <location>
        <begin position="76"/>
        <end position="97"/>
    </location>
</feature>
<feature type="repeat" description="LRR 3">
    <location>
        <begin position="99"/>
        <end position="120"/>
    </location>
</feature>
<feature type="repeat" description="LRR 4">
    <location>
        <begin position="122"/>
        <end position="143"/>
    </location>
</feature>
<feature type="repeat" description="LRR 5">
    <location>
        <begin position="145"/>
        <end position="167"/>
    </location>
</feature>
<feature type="repeat" description="LRR 6">
    <location>
        <begin position="168"/>
        <end position="189"/>
    </location>
</feature>
<feature type="repeat" description="LRR 7">
    <location>
        <begin position="191"/>
        <end position="212"/>
    </location>
</feature>
<accession>Q5BKY1</accession>
<accession>Q6ZVY4</accession>
<comment type="function">
    <text evidence="1">May play important roles in cardiac development and/or cardiac function.</text>
</comment>
<comment type="subcellular location">
    <subcellularLocation>
        <location evidence="1">Nucleus</location>
    </subcellularLocation>
</comment>
<comment type="sequence caution" evidence="2">
    <conflict type="erroneous initiation">
        <sequence resource="EMBL-CDS" id="BAC85724"/>
    </conflict>
</comment>
<proteinExistence type="evidence at protein level"/>
<organism>
    <name type="scientific">Homo sapiens</name>
    <name type="common">Human</name>
    <dbReference type="NCBI Taxonomy" id="9606"/>
    <lineage>
        <taxon>Eukaryota</taxon>
        <taxon>Metazoa</taxon>
        <taxon>Chordata</taxon>
        <taxon>Craniata</taxon>
        <taxon>Vertebrata</taxon>
        <taxon>Euteleostomi</taxon>
        <taxon>Mammalia</taxon>
        <taxon>Eutheria</taxon>
        <taxon>Euarchontoglires</taxon>
        <taxon>Primates</taxon>
        <taxon>Haplorrhini</taxon>
        <taxon>Catarrhini</taxon>
        <taxon>Hominidae</taxon>
        <taxon>Homo</taxon>
    </lineage>
</organism>
<keyword id="KW-0433">Leucine-rich repeat</keyword>
<keyword id="KW-0539">Nucleus</keyword>
<keyword id="KW-1267">Proteomics identification</keyword>
<keyword id="KW-1185">Reference proteome</keyword>
<keyword id="KW-0677">Repeat</keyword>
<protein>
    <recommendedName>
        <fullName>Leucine-rich repeat-containing protein 10</fullName>
    </recommendedName>
</protein>
<reference key="1">
    <citation type="journal article" date="2004" name="Nat. Genet.">
        <title>Complete sequencing and characterization of 21,243 full-length human cDNAs.</title>
        <authorList>
            <person name="Ota T."/>
            <person name="Suzuki Y."/>
            <person name="Nishikawa T."/>
            <person name="Otsuki T."/>
            <person name="Sugiyama T."/>
            <person name="Irie R."/>
            <person name="Wakamatsu A."/>
            <person name="Hayashi K."/>
            <person name="Sato H."/>
            <person name="Nagai K."/>
            <person name="Kimura K."/>
            <person name="Makita H."/>
            <person name="Sekine M."/>
            <person name="Obayashi M."/>
            <person name="Nishi T."/>
            <person name="Shibahara T."/>
            <person name="Tanaka T."/>
            <person name="Ishii S."/>
            <person name="Yamamoto J."/>
            <person name="Saito K."/>
            <person name="Kawai Y."/>
            <person name="Isono Y."/>
            <person name="Nakamura Y."/>
            <person name="Nagahari K."/>
            <person name="Murakami K."/>
            <person name="Yasuda T."/>
            <person name="Iwayanagi T."/>
            <person name="Wagatsuma M."/>
            <person name="Shiratori A."/>
            <person name="Sudo H."/>
            <person name="Hosoiri T."/>
            <person name="Kaku Y."/>
            <person name="Kodaira H."/>
            <person name="Kondo H."/>
            <person name="Sugawara M."/>
            <person name="Takahashi M."/>
            <person name="Kanda K."/>
            <person name="Yokoi T."/>
            <person name="Furuya T."/>
            <person name="Kikkawa E."/>
            <person name="Omura Y."/>
            <person name="Abe K."/>
            <person name="Kamihara K."/>
            <person name="Katsuta N."/>
            <person name="Sato K."/>
            <person name="Tanikawa M."/>
            <person name="Yamazaki M."/>
            <person name="Ninomiya K."/>
            <person name="Ishibashi T."/>
            <person name="Yamashita H."/>
            <person name="Murakawa K."/>
            <person name="Fujimori K."/>
            <person name="Tanai H."/>
            <person name="Kimata M."/>
            <person name="Watanabe M."/>
            <person name="Hiraoka S."/>
            <person name="Chiba Y."/>
            <person name="Ishida S."/>
            <person name="Ono Y."/>
            <person name="Takiguchi S."/>
            <person name="Watanabe S."/>
            <person name="Yosida M."/>
            <person name="Hotuta T."/>
            <person name="Kusano J."/>
            <person name="Kanehori K."/>
            <person name="Takahashi-Fujii A."/>
            <person name="Hara H."/>
            <person name="Tanase T.-O."/>
            <person name="Nomura Y."/>
            <person name="Togiya S."/>
            <person name="Komai F."/>
            <person name="Hara R."/>
            <person name="Takeuchi K."/>
            <person name="Arita M."/>
            <person name="Imose N."/>
            <person name="Musashino K."/>
            <person name="Yuuki H."/>
            <person name="Oshima A."/>
            <person name="Sasaki N."/>
            <person name="Aotsuka S."/>
            <person name="Yoshikawa Y."/>
            <person name="Matsunawa H."/>
            <person name="Ichihara T."/>
            <person name="Shiohata N."/>
            <person name="Sano S."/>
            <person name="Moriya S."/>
            <person name="Momiyama H."/>
            <person name="Satoh N."/>
            <person name="Takami S."/>
            <person name="Terashima Y."/>
            <person name="Suzuki O."/>
            <person name="Nakagawa S."/>
            <person name="Senoh A."/>
            <person name="Mizoguchi H."/>
            <person name="Goto Y."/>
            <person name="Shimizu F."/>
            <person name="Wakebe H."/>
            <person name="Hishigaki H."/>
            <person name="Watanabe T."/>
            <person name="Sugiyama A."/>
            <person name="Takemoto M."/>
            <person name="Kawakami B."/>
            <person name="Yamazaki M."/>
            <person name="Watanabe K."/>
            <person name="Kumagai A."/>
            <person name="Itakura S."/>
            <person name="Fukuzumi Y."/>
            <person name="Fujimori Y."/>
            <person name="Komiyama M."/>
            <person name="Tashiro H."/>
            <person name="Tanigami A."/>
            <person name="Fujiwara T."/>
            <person name="Ono T."/>
            <person name="Yamada K."/>
            <person name="Fujii Y."/>
            <person name="Ozaki K."/>
            <person name="Hirao M."/>
            <person name="Ohmori Y."/>
            <person name="Kawabata A."/>
            <person name="Hikiji T."/>
            <person name="Kobatake N."/>
            <person name="Inagaki H."/>
            <person name="Ikema Y."/>
            <person name="Okamoto S."/>
            <person name="Okitani R."/>
            <person name="Kawakami T."/>
            <person name="Noguchi S."/>
            <person name="Itoh T."/>
            <person name="Shigeta K."/>
            <person name="Senba T."/>
            <person name="Matsumura K."/>
            <person name="Nakajima Y."/>
            <person name="Mizuno T."/>
            <person name="Morinaga M."/>
            <person name="Sasaki M."/>
            <person name="Togashi T."/>
            <person name="Oyama M."/>
            <person name="Hata H."/>
            <person name="Watanabe M."/>
            <person name="Komatsu T."/>
            <person name="Mizushima-Sugano J."/>
            <person name="Satoh T."/>
            <person name="Shirai Y."/>
            <person name="Takahashi Y."/>
            <person name="Nakagawa K."/>
            <person name="Okumura K."/>
            <person name="Nagase T."/>
            <person name="Nomura N."/>
            <person name="Kikuchi H."/>
            <person name="Masuho Y."/>
            <person name="Yamashita R."/>
            <person name="Nakai K."/>
            <person name="Yada T."/>
            <person name="Nakamura Y."/>
            <person name="Ohara O."/>
            <person name="Isogai T."/>
            <person name="Sugano S."/>
        </authorList>
    </citation>
    <scope>NUCLEOTIDE SEQUENCE [LARGE SCALE MRNA]</scope>
    <source>
        <tissue>Pericardium</tissue>
    </source>
</reference>
<reference key="2">
    <citation type="journal article" date="2004" name="Genome Res.">
        <title>The status, quality, and expansion of the NIH full-length cDNA project: the Mammalian Gene Collection (MGC).</title>
        <authorList>
            <consortium name="The MGC Project Team"/>
        </authorList>
    </citation>
    <scope>NUCLEOTIDE SEQUENCE [LARGE SCALE MRNA]</scope>
    <source>
        <tissue>Heart</tissue>
    </source>
</reference>
<evidence type="ECO:0000250" key="1"/>
<evidence type="ECO:0000305" key="2"/>
<sequence>MGNTIRALVAFIPADRCQNYVVRDLREMPLDKMVDLSGSQLRRFPLHVCSFRELVKLYLSDNHLNSLPPELGQLQNLQILALDFNNFKALPQVVCTLKQLCILYLGNNKLCDLPSELSLLQNLRTLWIEANCLTQLPDVVCELSLLKTLHAGSNALRLLPGQLRRLQELRTIWLSGNRLTDFPTVLLHMPFLEVIDVDWNSIRYFPSLAHLSSLKLVIYDHNPCRNAPKVAKGVRRVGRWAEETPEPDPRKARRYALVREESQELQAPVPLLPPTNS</sequence>
<gene>
    <name type="primary">LRRC10</name>
</gene>
<name>LRC10_HUMAN</name>
<dbReference type="EMBL" id="AK123908">
    <property type="protein sequence ID" value="BAC85724.1"/>
    <property type="status" value="ALT_INIT"/>
    <property type="molecule type" value="mRNA"/>
</dbReference>
<dbReference type="EMBL" id="BC090881">
    <property type="protein sequence ID" value="AAH90881.1"/>
    <property type="molecule type" value="mRNA"/>
</dbReference>
<dbReference type="CCDS" id="CCDS31856.1"/>
<dbReference type="RefSeq" id="NP_963844.2">
    <property type="nucleotide sequence ID" value="NM_201550.4"/>
</dbReference>
<dbReference type="SMR" id="Q5BKY1"/>
<dbReference type="BioGRID" id="132004">
    <property type="interactions" value="39"/>
</dbReference>
<dbReference type="FunCoup" id="Q5BKY1">
    <property type="interactions" value="9"/>
</dbReference>
<dbReference type="IntAct" id="Q5BKY1">
    <property type="interactions" value="35"/>
</dbReference>
<dbReference type="STRING" id="9606.ENSP00000355166"/>
<dbReference type="iPTMnet" id="Q5BKY1"/>
<dbReference type="PhosphoSitePlus" id="Q5BKY1"/>
<dbReference type="BioMuta" id="LRRC10"/>
<dbReference type="DMDM" id="74762168"/>
<dbReference type="jPOST" id="Q5BKY1"/>
<dbReference type="MassIVE" id="Q5BKY1"/>
<dbReference type="PaxDb" id="9606-ENSP00000355166"/>
<dbReference type="PeptideAtlas" id="Q5BKY1"/>
<dbReference type="ProteomicsDB" id="62709"/>
<dbReference type="Antibodypedia" id="44319">
    <property type="antibodies" value="45 antibodies from 12 providers"/>
</dbReference>
<dbReference type="DNASU" id="376132"/>
<dbReference type="Ensembl" id="ENST00000361484.5">
    <property type="protein sequence ID" value="ENSP00000355166.3"/>
    <property type="gene ID" value="ENSG00000198812.5"/>
</dbReference>
<dbReference type="GeneID" id="376132"/>
<dbReference type="KEGG" id="hsa:376132"/>
<dbReference type="MANE-Select" id="ENST00000361484.5">
    <property type="protein sequence ID" value="ENSP00000355166.3"/>
    <property type="RefSeq nucleotide sequence ID" value="NM_201550.4"/>
    <property type="RefSeq protein sequence ID" value="NP_963844.2"/>
</dbReference>
<dbReference type="UCSC" id="uc001svc.4">
    <property type="organism name" value="human"/>
</dbReference>
<dbReference type="AGR" id="HGNC:20264"/>
<dbReference type="CTD" id="376132"/>
<dbReference type="DisGeNET" id="376132"/>
<dbReference type="GeneCards" id="LRRC10"/>
<dbReference type="HGNC" id="HGNC:20264">
    <property type="gene designation" value="LRRC10"/>
</dbReference>
<dbReference type="HPA" id="ENSG00000198812">
    <property type="expression patterns" value="Tissue enriched (heart)"/>
</dbReference>
<dbReference type="MalaCards" id="LRRC10"/>
<dbReference type="MIM" id="610846">
    <property type="type" value="gene"/>
</dbReference>
<dbReference type="neXtProt" id="NX_Q5BKY1"/>
<dbReference type="OpenTargets" id="ENSG00000198812"/>
<dbReference type="PharmGKB" id="PA134896853"/>
<dbReference type="VEuPathDB" id="HostDB:ENSG00000198812"/>
<dbReference type="eggNOG" id="KOG0619">
    <property type="taxonomic scope" value="Eukaryota"/>
</dbReference>
<dbReference type="GeneTree" id="ENSGT00940000155040"/>
<dbReference type="HOGENOM" id="CLU_000288_18_15_1"/>
<dbReference type="InParanoid" id="Q5BKY1"/>
<dbReference type="OMA" id="LWIESNC"/>
<dbReference type="OrthoDB" id="40118at2759"/>
<dbReference type="PAN-GO" id="Q5BKY1">
    <property type="GO annotations" value="4 GO annotations based on evolutionary models"/>
</dbReference>
<dbReference type="PhylomeDB" id="Q5BKY1"/>
<dbReference type="TreeFam" id="TF332853"/>
<dbReference type="PathwayCommons" id="Q5BKY1"/>
<dbReference type="SignaLink" id="Q5BKY1"/>
<dbReference type="BioGRID-ORCS" id="376132">
    <property type="hits" value="10 hits in 1146 CRISPR screens"/>
</dbReference>
<dbReference type="GenomeRNAi" id="376132"/>
<dbReference type="Pharos" id="Q5BKY1">
    <property type="development level" value="Tdark"/>
</dbReference>
<dbReference type="PRO" id="PR:Q5BKY1"/>
<dbReference type="Proteomes" id="UP000005640">
    <property type="component" value="Chromosome 12"/>
</dbReference>
<dbReference type="RNAct" id="Q5BKY1">
    <property type="molecule type" value="protein"/>
</dbReference>
<dbReference type="Bgee" id="ENSG00000198812">
    <property type="expression patterns" value="Expressed in apex of heart and 9 other cell types or tissues"/>
</dbReference>
<dbReference type="GO" id="GO:0005856">
    <property type="term" value="C:cytoskeleton"/>
    <property type="evidence" value="ECO:0000318"/>
    <property type="project" value="GO_Central"/>
</dbReference>
<dbReference type="GO" id="GO:0005739">
    <property type="term" value="C:mitochondrion"/>
    <property type="evidence" value="ECO:0007669"/>
    <property type="project" value="Ensembl"/>
</dbReference>
<dbReference type="GO" id="GO:0005634">
    <property type="term" value="C:nucleus"/>
    <property type="evidence" value="ECO:0007669"/>
    <property type="project" value="UniProtKB-SubCell"/>
</dbReference>
<dbReference type="GO" id="GO:0030017">
    <property type="term" value="C:sarcomere"/>
    <property type="evidence" value="ECO:0000318"/>
    <property type="project" value="GO_Central"/>
</dbReference>
<dbReference type="GO" id="GO:0003779">
    <property type="term" value="F:actin binding"/>
    <property type="evidence" value="ECO:0000318"/>
    <property type="project" value="GO_Central"/>
</dbReference>
<dbReference type="GO" id="GO:0051393">
    <property type="term" value="F:alpha-actinin binding"/>
    <property type="evidence" value="ECO:0007669"/>
    <property type="project" value="Ensembl"/>
</dbReference>
<dbReference type="GO" id="GO:0055013">
    <property type="term" value="P:cardiac muscle cell development"/>
    <property type="evidence" value="ECO:0000318"/>
    <property type="project" value="GO_Central"/>
</dbReference>
<dbReference type="FunFam" id="3.80.10.10:FF:002815">
    <property type="entry name" value="Leucine-rich repeat-containing protein 10"/>
    <property type="match status" value="1"/>
</dbReference>
<dbReference type="Gene3D" id="3.80.10.10">
    <property type="entry name" value="Ribonuclease Inhibitor"/>
    <property type="match status" value="2"/>
</dbReference>
<dbReference type="InterPro" id="IPR001611">
    <property type="entry name" value="Leu-rich_rpt"/>
</dbReference>
<dbReference type="InterPro" id="IPR003591">
    <property type="entry name" value="Leu-rich_rpt_typical-subtyp"/>
</dbReference>
<dbReference type="InterPro" id="IPR032675">
    <property type="entry name" value="LRR_dom_sf"/>
</dbReference>
<dbReference type="InterPro" id="IPR050216">
    <property type="entry name" value="LRR_domain-containing"/>
</dbReference>
<dbReference type="PANTHER" id="PTHR48051">
    <property type="match status" value="1"/>
</dbReference>
<dbReference type="PANTHER" id="PTHR48051:SF51">
    <property type="entry name" value="LEUCINE-RICH REPEAT-CONTAINING PROTEIN 10B"/>
    <property type="match status" value="1"/>
</dbReference>
<dbReference type="Pfam" id="PF13855">
    <property type="entry name" value="LRR_8"/>
    <property type="match status" value="1"/>
</dbReference>
<dbReference type="SMART" id="SM00364">
    <property type="entry name" value="LRR_BAC"/>
    <property type="match status" value="6"/>
</dbReference>
<dbReference type="SMART" id="SM00369">
    <property type="entry name" value="LRR_TYP"/>
    <property type="match status" value="4"/>
</dbReference>
<dbReference type="SUPFAM" id="SSF52058">
    <property type="entry name" value="L domain-like"/>
    <property type="match status" value="1"/>
</dbReference>
<dbReference type="PROSITE" id="PS51450">
    <property type="entry name" value="LRR"/>
    <property type="match status" value="7"/>
</dbReference>